<accession>Q3ITQ4</accession>
<organism>
    <name type="scientific">Natronomonas pharaonis (strain ATCC 35678 / DSM 2160 / CIP 103997 / JCM 8858 / NBRC 14720 / NCIMB 2260 / Gabara)</name>
    <name type="common">Halobacterium pharaonis</name>
    <dbReference type="NCBI Taxonomy" id="348780"/>
    <lineage>
        <taxon>Archaea</taxon>
        <taxon>Methanobacteriati</taxon>
        <taxon>Methanobacteriota</taxon>
        <taxon>Stenosarchaea group</taxon>
        <taxon>Halobacteria</taxon>
        <taxon>Halobacteriales</taxon>
        <taxon>Haloarculaceae</taxon>
        <taxon>Natronomonas</taxon>
    </lineage>
</organism>
<reference key="1">
    <citation type="journal article" date="2005" name="Genome Res.">
        <title>Living with two extremes: conclusions from the genome sequence of Natronomonas pharaonis.</title>
        <authorList>
            <person name="Falb M."/>
            <person name="Pfeiffer F."/>
            <person name="Palm P."/>
            <person name="Rodewald K."/>
            <person name="Hickmann V."/>
            <person name="Tittor J."/>
            <person name="Oesterhelt D."/>
        </authorList>
    </citation>
    <scope>NUCLEOTIDE SEQUENCE [LARGE SCALE GENOMIC DNA]</scope>
    <source>
        <strain>ATCC 35678 / DSM 2160 / CIP 103997 / JCM 8858 / NBRC 14720 / NCIMB 2260 / Gabara</strain>
    </source>
</reference>
<feature type="chain" id="PRO_1000063674" description="UPF0213 protein NP_0776A">
    <location>
        <begin position="1"/>
        <end position="85"/>
    </location>
</feature>
<feature type="domain" description="GIY-YIG" evidence="1">
    <location>
        <begin position="3"/>
        <end position="78"/>
    </location>
</feature>
<feature type="region of interest" description="Disordered" evidence="2">
    <location>
        <begin position="58"/>
        <end position="85"/>
    </location>
</feature>
<feature type="compositionally biased region" description="Basic and acidic residues" evidence="2">
    <location>
        <begin position="58"/>
        <end position="70"/>
    </location>
</feature>
<protein>
    <recommendedName>
        <fullName>UPF0213 protein NP_0776A</fullName>
    </recommendedName>
</protein>
<name>Y776_NATPD</name>
<sequence>MAADHYVYVLSCADETLYTGYTTNVERRVAEHDAGEGAKYTRGRTPVELVHTERFDSKSAAMQREHEIKSLSRAKKERLVADETG</sequence>
<keyword id="KW-1185">Reference proteome</keyword>
<comment type="similarity">
    <text evidence="3">Belongs to the UPF0213 family.</text>
</comment>
<gene>
    <name type="ordered locus">NP_0776A</name>
</gene>
<proteinExistence type="inferred from homology"/>
<evidence type="ECO:0000255" key="1">
    <source>
        <dbReference type="PROSITE-ProRule" id="PRU00977"/>
    </source>
</evidence>
<evidence type="ECO:0000256" key="2">
    <source>
        <dbReference type="SAM" id="MobiDB-lite"/>
    </source>
</evidence>
<evidence type="ECO:0000305" key="3"/>
<dbReference type="EMBL" id="CR936257">
    <property type="protein sequence ID" value="CAI48479.1"/>
    <property type="molecule type" value="Genomic_DNA"/>
</dbReference>
<dbReference type="RefSeq" id="WP_011322115.1">
    <property type="nucleotide sequence ID" value="NC_007426.1"/>
</dbReference>
<dbReference type="SMR" id="Q3ITQ4"/>
<dbReference type="STRING" id="348780.NP_0776A"/>
<dbReference type="EnsemblBacteria" id="CAI48479">
    <property type="protein sequence ID" value="CAI48479"/>
    <property type="gene ID" value="NP_0776A"/>
</dbReference>
<dbReference type="GeneID" id="3700959"/>
<dbReference type="KEGG" id="nph:NP_0776A"/>
<dbReference type="eggNOG" id="arCOG04722">
    <property type="taxonomic scope" value="Archaea"/>
</dbReference>
<dbReference type="HOGENOM" id="CLU_135650_0_3_2"/>
<dbReference type="OrthoDB" id="297764at2157"/>
<dbReference type="Proteomes" id="UP000002698">
    <property type="component" value="Chromosome"/>
</dbReference>
<dbReference type="CDD" id="cd10456">
    <property type="entry name" value="GIY-YIG_UPF0213"/>
    <property type="match status" value="1"/>
</dbReference>
<dbReference type="Gene3D" id="3.40.1440.10">
    <property type="entry name" value="GIY-YIG endonuclease"/>
    <property type="match status" value="1"/>
</dbReference>
<dbReference type="InterPro" id="IPR000305">
    <property type="entry name" value="GIY-YIG_endonuc"/>
</dbReference>
<dbReference type="InterPro" id="IPR035901">
    <property type="entry name" value="GIY-YIG_endonuc_sf"/>
</dbReference>
<dbReference type="InterPro" id="IPR050190">
    <property type="entry name" value="UPF0213_domain"/>
</dbReference>
<dbReference type="PANTHER" id="PTHR34477">
    <property type="entry name" value="UPF0213 PROTEIN YHBQ"/>
    <property type="match status" value="1"/>
</dbReference>
<dbReference type="PANTHER" id="PTHR34477:SF1">
    <property type="entry name" value="UPF0213 PROTEIN YHBQ"/>
    <property type="match status" value="1"/>
</dbReference>
<dbReference type="Pfam" id="PF01541">
    <property type="entry name" value="GIY-YIG"/>
    <property type="match status" value="1"/>
</dbReference>
<dbReference type="SUPFAM" id="SSF82771">
    <property type="entry name" value="GIY-YIG endonuclease"/>
    <property type="match status" value="1"/>
</dbReference>
<dbReference type="PROSITE" id="PS50164">
    <property type="entry name" value="GIY_YIG"/>
    <property type="match status" value="1"/>
</dbReference>